<proteinExistence type="inferred from homology"/>
<accession>P89083</accession>
<evidence type="ECO:0000250" key="1">
    <source>
        <dbReference type="UniProtKB" id="P03239"/>
    </source>
</evidence>
<evidence type="ECO:0000305" key="2"/>
<dbReference type="EMBL" id="S82508">
    <property type="protein sequence ID" value="AAB37508.2"/>
    <property type="molecule type" value="Genomic_DNA"/>
</dbReference>
<dbReference type="EMBL" id="AJ854486">
    <property type="protein sequence ID" value="CAI05986.1"/>
    <property type="molecule type" value="Genomic_DNA"/>
</dbReference>
<dbReference type="Proteomes" id="UP000118285">
    <property type="component" value="Genome"/>
</dbReference>
<dbReference type="GO" id="GO:0030430">
    <property type="term" value="C:host cell cytoplasm"/>
    <property type="evidence" value="ECO:0007669"/>
    <property type="project" value="UniProtKB-SubCell"/>
</dbReference>
<dbReference type="GO" id="GO:0042025">
    <property type="term" value="C:host cell nucleus"/>
    <property type="evidence" value="ECO:0007669"/>
    <property type="project" value="UniProtKB-SubCell"/>
</dbReference>
<dbReference type="InterPro" id="IPR007615">
    <property type="entry name" value="Adenovirus_E4_30/34"/>
</dbReference>
<dbReference type="Pfam" id="PF04528">
    <property type="entry name" value="Adeno_E4_34"/>
    <property type="match status" value="1"/>
</dbReference>
<keyword id="KW-0244">Early protein</keyword>
<keyword id="KW-1035">Host cytoplasm</keyword>
<keyword id="KW-1048">Host nucleus</keyword>
<comment type="function">
    <text evidence="1">Plays a major role to prevent cellular inhibition of viral genome replication by nuclear bodies. Assembles an SCF-like E3 ubiquitin ligase complex based on the cellular proteins ELOB, ELOC, CUL5 and RBX1, in cooperation with viral E1B-55K. This viral RING-type ligase ubiquitinates cellular substrates prior to proteasomal degradation: p53/TP53, LIG4, MRE11-RAD50-NBS1 (MRN) complex, ITGA3, DAXX and BLM.</text>
</comment>
<comment type="subunit">
    <text evidence="1">Interacts with E1B-55k.</text>
</comment>
<comment type="subcellular location">
    <subcellularLocation>
        <location evidence="1">Host nucleus</location>
    </subcellularLocation>
    <subcellularLocation>
        <location evidence="1">Host cytoplasm</location>
    </subcellularLocation>
</comment>
<comment type="similarity">
    <text evidence="2">Belongs to the adenoviridae E4 30 to 34 kDa protein family.</text>
</comment>
<name>E434_ADE09</name>
<reference key="1">
    <citation type="journal article" date="1996" name="Breast Cancer Res. Treat.">
        <title>Mammary tumors induced by human adenovirus type 9: a role for the viral early region 4 gene.</title>
        <authorList>
            <person name="Javier R.T."/>
            <person name="Shenk T."/>
        </authorList>
    </citation>
    <scope>NUCLEOTIDE SEQUENCE [GENOMIC DNA]</scope>
</reference>
<reference key="2">
    <citation type="submission" date="2004-11" db="EMBL/GenBank/DDBJ databases">
        <title>Adenovirus type 9, complete sequence.</title>
        <authorList>
            <person name="Buettner W.H."/>
            <person name="Veres-Molnar S.K."/>
        </authorList>
    </citation>
    <scope>NUCLEOTIDE SEQUENCE [LARGE SCALE GENOMIC DNA]</scope>
    <source>
        <strain>Isolate ATCC VR-1086 / Hicks / V-209-003-014</strain>
    </source>
</reference>
<protein>
    <recommendedName>
        <fullName>Early E4 34 kDa protein</fullName>
    </recommendedName>
</protein>
<organism>
    <name type="scientific">Human adenovirus D serotype 9</name>
    <name type="common">HAdV-9</name>
    <name type="synonym">Human adenovirus 9</name>
    <dbReference type="NCBI Taxonomy" id="10527"/>
    <lineage>
        <taxon>Viruses</taxon>
        <taxon>Varidnaviria</taxon>
        <taxon>Bamfordvirae</taxon>
        <taxon>Preplasmiviricota</taxon>
        <taxon>Tectiliviricetes</taxon>
        <taxon>Rowavirales</taxon>
        <taxon>Adenoviridae</taxon>
        <taxon>Mastadenovirus</taxon>
        <taxon>Human mastadenovirus D</taxon>
    </lineage>
</organism>
<sequence length="292" mass="34083">MQTEIQSSSLRHHPYRRARLPRSDEETRASLTEQHPLLPDCDHADYHNVSSVRGLPCAAGFTLLQEFPVPWDMILTPEEIKILKRCMSVCLCPATLDLVRAQMVSGYERWILHCHCSSPGSLQCRAGGTLLAVWFRRVIYGCMFNQRFPWYRQIVNRNMPKEIMYMGSVFMRGRHLIYCRIWYDGHVGSIIPNMSFGWSALNYGLLNNMVIMCCTYCENMAEIRMRCCARRTRRLMLKAVGIIVRETCDPDPICSSRTEPRRQRLLRALMERHRPILFSEYESVRSSHSTRL</sequence>
<feature type="chain" id="PRO_0000221777" description="Early E4 34 kDa protein">
    <location>
        <begin position="1"/>
        <end position="292"/>
    </location>
</feature>
<organismHost>
    <name type="scientific">Homo sapiens</name>
    <name type="common">Human</name>
    <dbReference type="NCBI Taxonomy" id="9606"/>
</organismHost>